<comment type="similarity">
    <text evidence="1">Belongs to the eukaryotic ribosomal protein eS24 family.</text>
</comment>
<evidence type="ECO:0000255" key="1">
    <source>
        <dbReference type="HAMAP-Rule" id="MF_00545"/>
    </source>
</evidence>
<evidence type="ECO:0000305" key="2"/>
<sequence>MEVDILSEDENSMLHRTDIQFEIAHEDATPSRLSVRDSLAAKINKDSDEVVVHKLDTKFGMRKTIGYAKVYDSPQSARQVEQDYMLKRNKIEIESEDEDSAAEGA</sequence>
<accession>Q18KI1</accession>
<organism>
    <name type="scientific">Haloquadratum walsbyi (strain DSM 16790 / HBSQ001)</name>
    <dbReference type="NCBI Taxonomy" id="362976"/>
    <lineage>
        <taxon>Archaea</taxon>
        <taxon>Methanobacteriati</taxon>
        <taxon>Methanobacteriota</taxon>
        <taxon>Stenosarchaea group</taxon>
        <taxon>Halobacteria</taxon>
        <taxon>Halobacteriales</taxon>
        <taxon>Haloferacaceae</taxon>
        <taxon>Haloquadratum</taxon>
    </lineage>
</organism>
<protein>
    <recommendedName>
        <fullName evidence="1">Small ribosomal subunit protein eS24</fullName>
    </recommendedName>
    <alternativeName>
        <fullName evidence="2">30S ribosomal protein S24e</fullName>
    </alternativeName>
</protein>
<dbReference type="EMBL" id="AM180088">
    <property type="protein sequence ID" value="CAJ51468.1"/>
    <property type="molecule type" value="Genomic_DNA"/>
</dbReference>
<dbReference type="RefSeq" id="WP_011570625.1">
    <property type="nucleotide sequence ID" value="NC_008212.1"/>
</dbReference>
<dbReference type="SMR" id="Q18KI1"/>
<dbReference type="STRING" id="362976.HQ_1340A"/>
<dbReference type="GeneID" id="4194657"/>
<dbReference type="KEGG" id="hwa:HQ_1340A"/>
<dbReference type="eggNOG" id="arCOG04182">
    <property type="taxonomic scope" value="Archaea"/>
</dbReference>
<dbReference type="HOGENOM" id="CLU_107248_3_1_2"/>
<dbReference type="Proteomes" id="UP000001975">
    <property type="component" value="Chromosome"/>
</dbReference>
<dbReference type="GO" id="GO:1990904">
    <property type="term" value="C:ribonucleoprotein complex"/>
    <property type="evidence" value="ECO:0007669"/>
    <property type="project" value="UniProtKB-KW"/>
</dbReference>
<dbReference type="GO" id="GO:0005840">
    <property type="term" value="C:ribosome"/>
    <property type="evidence" value="ECO:0007669"/>
    <property type="project" value="UniProtKB-KW"/>
</dbReference>
<dbReference type="GO" id="GO:0003735">
    <property type="term" value="F:structural constituent of ribosome"/>
    <property type="evidence" value="ECO:0007669"/>
    <property type="project" value="InterPro"/>
</dbReference>
<dbReference type="GO" id="GO:0006412">
    <property type="term" value="P:translation"/>
    <property type="evidence" value="ECO:0007669"/>
    <property type="project" value="UniProtKB-UniRule"/>
</dbReference>
<dbReference type="Gene3D" id="3.30.70.330">
    <property type="match status" value="1"/>
</dbReference>
<dbReference type="HAMAP" id="MF_00545">
    <property type="entry name" value="Ribosomal_eS24"/>
    <property type="match status" value="1"/>
</dbReference>
<dbReference type="InterPro" id="IPR012677">
    <property type="entry name" value="Nucleotide-bd_a/b_plait_sf"/>
</dbReference>
<dbReference type="InterPro" id="IPR001976">
    <property type="entry name" value="Ribosomal_eS24"/>
</dbReference>
<dbReference type="InterPro" id="IPR018098">
    <property type="entry name" value="Ribosomal_eS24_CS"/>
</dbReference>
<dbReference type="InterPro" id="IPR012678">
    <property type="entry name" value="Ribosomal_uL23/eL15/eS24_sf"/>
</dbReference>
<dbReference type="PANTHER" id="PTHR10496">
    <property type="entry name" value="40S RIBOSOMAL PROTEIN S24"/>
    <property type="match status" value="1"/>
</dbReference>
<dbReference type="Pfam" id="PF01282">
    <property type="entry name" value="Ribosomal_S24e"/>
    <property type="match status" value="1"/>
</dbReference>
<dbReference type="SUPFAM" id="SSF54189">
    <property type="entry name" value="Ribosomal proteins S24e, L23 and L15e"/>
    <property type="match status" value="1"/>
</dbReference>
<dbReference type="PROSITE" id="PS00529">
    <property type="entry name" value="RIBOSOMAL_S24E"/>
    <property type="match status" value="1"/>
</dbReference>
<keyword id="KW-1185">Reference proteome</keyword>
<keyword id="KW-0687">Ribonucleoprotein</keyword>
<keyword id="KW-0689">Ribosomal protein</keyword>
<gene>
    <name evidence="1" type="primary">rps24e</name>
    <name type="ordered locus">HQ_1340A</name>
</gene>
<proteinExistence type="inferred from homology"/>
<feature type="chain" id="PRO_1000017736" description="Small ribosomal subunit protein eS24">
    <location>
        <begin position="1"/>
        <end position="105"/>
    </location>
</feature>
<reference key="1">
    <citation type="journal article" date="2006" name="BMC Genomics">
        <title>The genome of the square archaeon Haloquadratum walsbyi: life at the limits of water activity.</title>
        <authorList>
            <person name="Bolhuis H."/>
            <person name="Palm P."/>
            <person name="Wende A."/>
            <person name="Falb M."/>
            <person name="Rampp M."/>
            <person name="Rodriguez-Valera F."/>
            <person name="Pfeiffer F."/>
            <person name="Oesterhelt D."/>
        </authorList>
    </citation>
    <scope>NUCLEOTIDE SEQUENCE [LARGE SCALE GENOMIC DNA]</scope>
    <source>
        <strain>DSM 16790 / HBSQ001</strain>
    </source>
</reference>
<name>RS24_HALWD</name>